<protein>
    <recommendedName>
        <fullName evidence="1">UDP-N-acetylmuramate--L-alanine ligase</fullName>
        <ecNumber evidence="1">6.3.2.8</ecNumber>
    </recommendedName>
    <alternativeName>
        <fullName evidence="1">UDP-N-acetylmuramoyl-L-alanine synthetase</fullName>
    </alternativeName>
</protein>
<sequence length="502" mass="52456">MTALPAHLERVHMVGIGGAGMSGIARILLSRGGLVSGSDAKESRGVLALRARGAQVRIGHDADALDLLPGGPTVVVTTHAAIPKDNPELVEAARRGIPVILRPAVLASLMQGNRTFLVSGTHGKTSTTSMLVVALQHCGFDPSFAVGGELNEAGTNAHHGSGDVFVAEADESDGSLLQYDPNVIVVTNIEADHLDYFGSVEAYVKVFDDFVDKLRPGGLLIACLDDPGSADLAKRIVASGRSDIRVLGYGSADAQEVEAGTAFEPVDGVEVGVRLLGFHAHDVGGVLQFQLAGENAARTVRMAVPGRHMALNALAALLAARDAGAETEEIVEGLAGFGGVHRRFQFTGRERGVRVFDDYAHHPTEVRAVLGAAADLVRPEDDSSSTNSAAGRVIVVFQPHLYSRTAAFAVEFAQALDLADEVVVLDVYGAREEPMPGVSGALVAQSVTKPVHYQPDLSQAPKQVAALAHPGDIVITMGAGDVTMLGKQILDALRSAPHPAPR</sequence>
<reference key="1">
    <citation type="submission" date="2005-03" db="EMBL/GenBank/DDBJ databases">
        <title>Comparison of the complete genome sequences of Rhodococcus erythropolis PR4 and Rhodococcus opacus B4.</title>
        <authorList>
            <person name="Takarada H."/>
            <person name="Sekine M."/>
            <person name="Hosoyama A."/>
            <person name="Yamada R."/>
            <person name="Fujisawa T."/>
            <person name="Omata S."/>
            <person name="Shimizu A."/>
            <person name="Tsukatani N."/>
            <person name="Tanikawa S."/>
            <person name="Fujita N."/>
            <person name="Harayama S."/>
        </authorList>
    </citation>
    <scope>NUCLEOTIDE SEQUENCE [LARGE SCALE GENOMIC DNA]</scope>
    <source>
        <strain>PR4 / NBRC 100887</strain>
    </source>
</reference>
<evidence type="ECO:0000255" key="1">
    <source>
        <dbReference type="HAMAP-Rule" id="MF_00046"/>
    </source>
</evidence>
<keyword id="KW-0067">ATP-binding</keyword>
<keyword id="KW-0131">Cell cycle</keyword>
<keyword id="KW-0132">Cell division</keyword>
<keyword id="KW-0133">Cell shape</keyword>
<keyword id="KW-0961">Cell wall biogenesis/degradation</keyword>
<keyword id="KW-0963">Cytoplasm</keyword>
<keyword id="KW-0436">Ligase</keyword>
<keyword id="KW-0547">Nucleotide-binding</keyword>
<keyword id="KW-0573">Peptidoglycan synthesis</keyword>
<accession>C1A0X4</accession>
<comment type="function">
    <text evidence="1">Cell wall formation.</text>
</comment>
<comment type="catalytic activity">
    <reaction evidence="1">
        <text>UDP-N-acetyl-alpha-D-muramate + L-alanine + ATP = UDP-N-acetyl-alpha-D-muramoyl-L-alanine + ADP + phosphate + H(+)</text>
        <dbReference type="Rhea" id="RHEA:23372"/>
        <dbReference type="ChEBI" id="CHEBI:15378"/>
        <dbReference type="ChEBI" id="CHEBI:30616"/>
        <dbReference type="ChEBI" id="CHEBI:43474"/>
        <dbReference type="ChEBI" id="CHEBI:57972"/>
        <dbReference type="ChEBI" id="CHEBI:70757"/>
        <dbReference type="ChEBI" id="CHEBI:83898"/>
        <dbReference type="ChEBI" id="CHEBI:456216"/>
        <dbReference type="EC" id="6.3.2.8"/>
    </reaction>
</comment>
<comment type="pathway">
    <text evidence="1">Cell wall biogenesis; peptidoglycan biosynthesis.</text>
</comment>
<comment type="subcellular location">
    <subcellularLocation>
        <location evidence="1">Cytoplasm</location>
    </subcellularLocation>
</comment>
<comment type="similarity">
    <text evidence="1">Belongs to the MurCDEF family.</text>
</comment>
<dbReference type="EC" id="6.3.2.8" evidence="1"/>
<dbReference type="EMBL" id="AP008957">
    <property type="protein sequence ID" value="BAH34259.1"/>
    <property type="molecule type" value="Genomic_DNA"/>
</dbReference>
<dbReference type="RefSeq" id="WP_020908071.1">
    <property type="nucleotide sequence ID" value="NC_012490.1"/>
</dbReference>
<dbReference type="SMR" id="C1A0X4"/>
<dbReference type="KEGG" id="rer:RER_35510"/>
<dbReference type="PATRIC" id="fig|234621.6.peg.4067"/>
<dbReference type="eggNOG" id="COG0773">
    <property type="taxonomic scope" value="Bacteria"/>
</dbReference>
<dbReference type="HOGENOM" id="CLU_028104_2_2_11"/>
<dbReference type="UniPathway" id="UPA00219"/>
<dbReference type="Proteomes" id="UP000002204">
    <property type="component" value="Chromosome"/>
</dbReference>
<dbReference type="GO" id="GO:0005737">
    <property type="term" value="C:cytoplasm"/>
    <property type="evidence" value="ECO:0007669"/>
    <property type="project" value="UniProtKB-SubCell"/>
</dbReference>
<dbReference type="GO" id="GO:0005524">
    <property type="term" value="F:ATP binding"/>
    <property type="evidence" value="ECO:0007669"/>
    <property type="project" value="UniProtKB-UniRule"/>
</dbReference>
<dbReference type="GO" id="GO:0008763">
    <property type="term" value="F:UDP-N-acetylmuramate-L-alanine ligase activity"/>
    <property type="evidence" value="ECO:0007669"/>
    <property type="project" value="UniProtKB-UniRule"/>
</dbReference>
<dbReference type="GO" id="GO:0051301">
    <property type="term" value="P:cell division"/>
    <property type="evidence" value="ECO:0007669"/>
    <property type="project" value="UniProtKB-KW"/>
</dbReference>
<dbReference type="GO" id="GO:0071555">
    <property type="term" value="P:cell wall organization"/>
    <property type="evidence" value="ECO:0007669"/>
    <property type="project" value="UniProtKB-KW"/>
</dbReference>
<dbReference type="GO" id="GO:0009252">
    <property type="term" value="P:peptidoglycan biosynthetic process"/>
    <property type="evidence" value="ECO:0007669"/>
    <property type="project" value="UniProtKB-UniRule"/>
</dbReference>
<dbReference type="GO" id="GO:0008360">
    <property type="term" value="P:regulation of cell shape"/>
    <property type="evidence" value="ECO:0007669"/>
    <property type="project" value="UniProtKB-KW"/>
</dbReference>
<dbReference type="Gene3D" id="3.90.190.20">
    <property type="entry name" value="Mur ligase, C-terminal domain"/>
    <property type="match status" value="1"/>
</dbReference>
<dbReference type="Gene3D" id="3.40.1190.10">
    <property type="entry name" value="Mur-like, catalytic domain"/>
    <property type="match status" value="1"/>
</dbReference>
<dbReference type="Gene3D" id="3.40.50.720">
    <property type="entry name" value="NAD(P)-binding Rossmann-like Domain"/>
    <property type="match status" value="1"/>
</dbReference>
<dbReference type="HAMAP" id="MF_00046">
    <property type="entry name" value="MurC"/>
    <property type="match status" value="1"/>
</dbReference>
<dbReference type="InterPro" id="IPR036565">
    <property type="entry name" value="Mur-like_cat_sf"/>
</dbReference>
<dbReference type="InterPro" id="IPR004101">
    <property type="entry name" value="Mur_ligase_C"/>
</dbReference>
<dbReference type="InterPro" id="IPR036615">
    <property type="entry name" value="Mur_ligase_C_dom_sf"/>
</dbReference>
<dbReference type="InterPro" id="IPR013221">
    <property type="entry name" value="Mur_ligase_cen"/>
</dbReference>
<dbReference type="InterPro" id="IPR000713">
    <property type="entry name" value="Mur_ligase_N"/>
</dbReference>
<dbReference type="InterPro" id="IPR050061">
    <property type="entry name" value="MurCDEF_pg_biosynth"/>
</dbReference>
<dbReference type="InterPro" id="IPR005758">
    <property type="entry name" value="UDP-N-AcMur_Ala_ligase_MurC"/>
</dbReference>
<dbReference type="NCBIfam" id="TIGR01082">
    <property type="entry name" value="murC"/>
    <property type="match status" value="1"/>
</dbReference>
<dbReference type="PANTHER" id="PTHR43445:SF3">
    <property type="entry name" value="UDP-N-ACETYLMURAMATE--L-ALANINE LIGASE"/>
    <property type="match status" value="1"/>
</dbReference>
<dbReference type="PANTHER" id="PTHR43445">
    <property type="entry name" value="UDP-N-ACETYLMURAMATE--L-ALANINE LIGASE-RELATED"/>
    <property type="match status" value="1"/>
</dbReference>
<dbReference type="Pfam" id="PF01225">
    <property type="entry name" value="Mur_ligase"/>
    <property type="match status" value="1"/>
</dbReference>
<dbReference type="Pfam" id="PF02875">
    <property type="entry name" value="Mur_ligase_C"/>
    <property type="match status" value="1"/>
</dbReference>
<dbReference type="Pfam" id="PF08245">
    <property type="entry name" value="Mur_ligase_M"/>
    <property type="match status" value="1"/>
</dbReference>
<dbReference type="SUPFAM" id="SSF51984">
    <property type="entry name" value="MurCD N-terminal domain"/>
    <property type="match status" value="1"/>
</dbReference>
<dbReference type="SUPFAM" id="SSF53623">
    <property type="entry name" value="MurD-like peptide ligases, catalytic domain"/>
    <property type="match status" value="1"/>
</dbReference>
<dbReference type="SUPFAM" id="SSF53244">
    <property type="entry name" value="MurD-like peptide ligases, peptide-binding domain"/>
    <property type="match status" value="1"/>
</dbReference>
<name>MURC_RHOE4</name>
<feature type="chain" id="PRO_1000202187" description="UDP-N-acetylmuramate--L-alanine ligase">
    <location>
        <begin position="1"/>
        <end position="502"/>
    </location>
</feature>
<feature type="binding site" evidence="1">
    <location>
        <begin position="120"/>
        <end position="126"/>
    </location>
    <ligand>
        <name>ATP</name>
        <dbReference type="ChEBI" id="CHEBI:30616"/>
    </ligand>
</feature>
<gene>
    <name evidence="1" type="primary">murC</name>
    <name type="ordered locus">RER_35510</name>
</gene>
<proteinExistence type="inferred from homology"/>
<organism>
    <name type="scientific">Rhodococcus erythropolis (strain PR4 / NBRC 100887)</name>
    <dbReference type="NCBI Taxonomy" id="234621"/>
    <lineage>
        <taxon>Bacteria</taxon>
        <taxon>Bacillati</taxon>
        <taxon>Actinomycetota</taxon>
        <taxon>Actinomycetes</taxon>
        <taxon>Mycobacteriales</taxon>
        <taxon>Nocardiaceae</taxon>
        <taxon>Rhodococcus</taxon>
        <taxon>Rhodococcus erythropolis group</taxon>
    </lineage>
</organism>